<protein>
    <recommendedName>
        <fullName evidence="6">CCA tRNA nucleotidyltransferase 1, mitochondrial</fullName>
        <ecNumber evidence="3">2.7.7.72</ecNumber>
    </recommendedName>
    <alternativeName>
        <fullName>mitochondrial tRNA nucleotidyl transferase, CCA-adding</fullName>
        <shortName>mt CCA-adding enzyme</shortName>
        <shortName>mt tRNA CCA-diphosphorylase</shortName>
        <shortName>mt tRNA CCA-pyrophosphorylase</shortName>
        <shortName>mt tRNA adenylyltransferase</shortName>
    </alternativeName>
</protein>
<accession>Q8K1J6</accession>
<accession>Q3TKW1</accession>
<accession>Q3UX99</accession>
<accession>Q920N6</accession>
<accession>Q9CSX0</accession>
<evidence type="ECO:0000250" key="1">
    <source>
        <dbReference type="UniProtKB" id="O66728"/>
    </source>
</evidence>
<evidence type="ECO:0000250" key="2">
    <source>
        <dbReference type="UniProtKB" id="Q7SIB1"/>
    </source>
</evidence>
<evidence type="ECO:0000250" key="3">
    <source>
        <dbReference type="UniProtKB" id="Q96Q11"/>
    </source>
</evidence>
<evidence type="ECO:0000255" key="4"/>
<evidence type="ECO:0000303" key="5">
    <source>
    </source>
</evidence>
<evidence type="ECO:0000305" key="6"/>
<evidence type="ECO:0007744" key="7">
    <source>
    </source>
</evidence>
<keyword id="KW-0007">Acetylation</keyword>
<keyword id="KW-0025">Alternative splicing</keyword>
<keyword id="KW-0067">ATP-binding</keyword>
<keyword id="KW-0963">Cytoplasm</keyword>
<keyword id="KW-0460">Magnesium</keyword>
<keyword id="KW-0479">Metal-binding</keyword>
<keyword id="KW-0496">Mitochondrion</keyword>
<keyword id="KW-0547">Nucleotide-binding</keyword>
<keyword id="KW-0548">Nucleotidyltransferase</keyword>
<keyword id="KW-0539">Nucleus</keyword>
<keyword id="KW-0597">Phosphoprotein</keyword>
<keyword id="KW-1185">Reference proteome</keyword>
<keyword id="KW-0694">RNA-binding</keyword>
<keyword id="KW-0808">Transferase</keyword>
<keyword id="KW-0809">Transit peptide</keyword>
<keyword id="KW-0819">tRNA processing</keyword>
<gene>
    <name type="primary">Trnt1</name>
</gene>
<proteinExistence type="evidence at protein level"/>
<name>TRNT1_MOUSE</name>
<reference key="1">
    <citation type="journal article" date="2001" name="J. Biol. Chem.">
        <title>Identification and characterization of mammalian mitochondrial tRNA nucleotidyltransferases.</title>
        <authorList>
            <person name="Nagaike T."/>
            <person name="Suzuki T."/>
            <person name="Tomari Y."/>
            <person name="Takemoto-Hori C."/>
            <person name="Negayama F."/>
            <person name="Watanabe K."/>
            <person name="Ueda T."/>
        </authorList>
    </citation>
    <scope>NUCLEOTIDE SEQUENCE [MRNA] (ISOFORM 1)</scope>
</reference>
<reference key="2">
    <citation type="journal article" date="2005" name="Science">
        <title>The transcriptional landscape of the mammalian genome.</title>
        <authorList>
            <person name="Carninci P."/>
            <person name="Kasukawa T."/>
            <person name="Katayama S."/>
            <person name="Gough J."/>
            <person name="Frith M.C."/>
            <person name="Maeda N."/>
            <person name="Oyama R."/>
            <person name="Ravasi T."/>
            <person name="Lenhard B."/>
            <person name="Wells C."/>
            <person name="Kodzius R."/>
            <person name="Shimokawa K."/>
            <person name="Bajic V.B."/>
            <person name="Brenner S.E."/>
            <person name="Batalov S."/>
            <person name="Forrest A.R."/>
            <person name="Zavolan M."/>
            <person name="Davis M.J."/>
            <person name="Wilming L.G."/>
            <person name="Aidinis V."/>
            <person name="Allen J.E."/>
            <person name="Ambesi-Impiombato A."/>
            <person name="Apweiler R."/>
            <person name="Aturaliya R.N."/>
            <person name="Bailey T.L."/>
            <person name="Bansal M."/>
            <person name="Baxter L."/>
            <person name="Beisel K.W."/>
            <person name="Bersano T."/>
            <person name="Bono H."/>
            <person name="Chalk A.M."/>
            <person name="Chiu K.P."/>
            <person name="Choudhary V."/>
            <person name="Christoffels A."/>
            <person name="Clutterbuck D.R."/>
            <person name="Crowe M.L."/>
            <person name="Dalla E."/>
            <person name="Dalrymple B.P."/>
            <person name="de Bono B."/>
            <person name="Della Gatta G."/>
            <person name="di Bernardo D."/>
            <person name="Down T."/>
            <person name="Engstrom P."/>
            <person name="Fagiolini M."/>
            <person name="Faulkner G."/>
            <person name="Fletcher C.F."/>
            <person name="Fukushima T."/>
            <person name="Furuno M."/>
            <person name="Futaki S."/>
            <person name="Gariboldi M."/>
            <person name="Georgii-Hemming P."/>
            <person name="Gingeras T.R."/>
            <person name="Gojobori T."/>
            <person name="Green R.E."/>
            <person name="Gustincich S."/>
            <person name="Harbers M."/>
            <person name="Hayashi Y."/>
            <person name="Hensch T.K."/>
            <person name="Hirokawa N."/>
            <person name="Hill D."/>
            <person name="Huminiecki L."/>
            <person name="Iacono M."/>
            <person name="Ikeo K."/>
            <person name="Iwama A."/>
            <person name="Ishikawa T."/>
            <person name="Jakt M."/>
            <person name="Kanapin A."/>
            <person name="Katoh M."/>
            <person name="Kawasawa Y."/>
            <person name="Kelso J."/>
            <person name="Kitamura H."/>
            <person name="Kitano H."/>
            <person name="Kollias G."/>
            <person name="Krishnan S.P."/>
            <person name="Kruger A."/>
            <person name="Kummerfeld S.K."/>
            <person name="Kurochkin I.V."/>
            <person name="Lareau L.F."/>
            <person name="Lazarevic D."/>
            <person name="Lipovich L."/>
            <person name="Liu J."/>
            <person name="Liuni S."/>
            <person name="McWilliam S."/>
            <person name="Madan Babu M."/>
            <person name="Madera M."/>
            <person name="Marchionni L."/>
            <person name="Matsuda H."/>
            <person name="Matsuzawa S."/>
            <person name="Miki H."/>
            <person name="Mignone F."/>
            <person name="Miyake S."/>
            <person name="Morris K."/>
            <person name="Mottagui-Tabar S."/>
            <person name="Mulder N."/>
            <person name="Nakano N."/>
            <person name="Nakauchi H."/>
            <person name="Ng P."/>
            <person name="Nilsson R."/>
            <person name="Nishiguchi S."/>
            <person name="Nishikawa S."/>
            <person name="Nori F."/>
            <person name="Ohara O."/>
            <person name="Okazaki Y."/>
            <person name="Orlando V."/>
            <person name="Pang K.C."/>
            <person name="Pavan W.J."/>
            <person name="Pavesi G."/>
            <person name="Pesole G."/>
            <person name="Petrovsky N."/>
            <person name="Piazza S."/>
            <person name="Reed J."/>
            <person name="Reid J.F."/>
            <person name="Ring B.Z."/>
            <person name="Ringwald M."/>
            <person name="Rost B."/>
            <person name="Ruan Y."/>
            <person name="Salzberg S.L."/>
            <person name="Sandelin A."/>
            <person name="Schneider C."/>
            <person name="Schoenbach C."/>
            <person name="Sekiguchi K."/>
            <person name="Semple C.A."/>
            <person name="Seno S."/>
            <person name="Sessa L."/>
            <person name="Sheng Y."/>
            <person name="Shibata Y."/>
            <person name="Shimada H."/>
            <person name="Shimada K."/>
            <person name="Silva D."/>
            <person name="Sinclair B."/>
            <person name="Sperling S."/>
            <person name="Stupka E."/>
            <person name="Sugiura K."/>
            <person name="Sultana R."/>
            <person name="Takenaka Y."/>
            <person name="Taki K."/>
            <person name="Tammoja K."/>
            <person name="Tan S.L."/>
            <person name="Tang S."/>
            <person name="Taylor M.S."/>
            <person name="Tegner J."/>
            <person name="Teichmann S.A."/>
            <person name="Ueda H.R."/>
            <person name="van Nimwegen E."/>
            <person name="Verardo R."/>
            <person name="Wei C.L."/>
            <person name="Yagi K."/>
            <person name="Yamanishi H."/>
            <person name="Zabarovsky E."/>
            <person name="Zhu S."/>
            <person name="Zimmer A."/>
            <person name="Hide W."/>
            <person name="Bult C."/>
            <person name="Grimmond S.M."/>
            <person name="Teasdale R.D."/>
            <person name="Liu E.T."/>
            <person name="Brusic V."/>
            <person name="Quackenbush J."/>
            <person name="Wahlestedt C."/>
            <person name="Mattick J.S."/>
            <person name="Hume D.A."/>
            <person name="Kai C."/>
            <person name="Sasaki D."/>
            <person name="Tomaru Y."/>
            <person name="Fukuda S."/>
            <person name="Kanamori-Katayama M."/>
            <person name="Suzuki M."/>
            <person name="Aoki J."/>
            <person name="Arakawa T."/>
            <person name="Iida J."/>
            <person name="Imamura K."/>
            <person name="Itoh M."/>
            <person name="Kato T."/>
            <person name="Kawaji H."/>
            <person name="Kawagashira N."/>
            <person name="Kawashima T."/>
            <person name="Kojima M."/>
            <person name="Kondo S."/>
            <person name="Konno H."/>
            <person name="Nakano K."/>
            <person name="Ninomiya N."/>
            <person name="Nishio T."/>
            <person name="Okada M."/>
            <person name="Plessy C."/>
            <person name="Shibata K."/>
            <person name="Shiraki T."/>
            <person name="Suzuki S."/>
            <person name="Tagami M."/>
            <person name="Waki K."/>
            <person name="Watahiki A."/>
            <person name="Okamura-Oho Y."/>
            <person name="Suzuki H."/>
            <person name="Kawai J."/>
            <person name="Hayashizaki Y."/>
        </authorList>
    </citation>
    <scope>NUCLEOTIDE SEQUENCE [LARGE SCALE MRNA] (ISOFORMS 1 AND 2)</scope>
    <source>
        <strain>C57BL/6J</strain>
        <tissue>Blastocyst</tissue>
        <tissue>Bone marrow macrophage</tissue>
        <tissue>Egg</tissue>
        <tissue>Embryo</tissue>
    </source>
</reference>
<reference key="3">
    <citation type="journal article" date="2004" name="Genome Res.">
        <title>The status, quality, and expansion of the NIH full-length cDNA project: the Mammalian Gene Collection (MGC).</title>
        <authorList>
            <consortium name="The MGC Project Team"/>
        </authorList>
    </citation>
    <scope>NUCLEOTIDE SEQUENCE [LARGE SCALE MRNA] (ISOFORM 1)</scope>
    <source>
        <strain>FVB/N</strain>
        <tissue>Mammary gland</tissue>
    </source>
</reference>
<reference key="4">
    <citation type="journal article" date="2010" name="Cell">
        <title>A tissue-specific atlas of mouse protein phosphorylation and expression.</title>
        <authorList>
            <person name="Huttlin E.L."/>
            <person name="Jedrychowski M.P."/>
            <person name="Elias J.E."/>
            <person name="Goswami T."/>
            <person name="Rad R."/>
            <person name="Beausoleil S.A."/>
            <person name="Villen J."/>
            <person name="Haas W."/>
            <person name="Sowa M.E."/>
            <person name="Gygi S.P."/>
        </authorList>
    </citation>
    <scope>IDENTIFICATION BY MASS SPECTROMETRY [LARGE SCALE ANALYSIS]</scope>
    <source>
        <tissue>Brain</tissue>
        <tissue>Brown adipose tissue</tissue>
        <tissue>Heart</tissue>
        <tissue>Kidney</tissue>
        <tissue>Lung</tissue>
        <tissue>Pancreas</tissue>
        <tissue>Spleen</tissue>
        <tissue>Testis</tissue>
    </source>
</reference>
<reference key="5">
    <citation type="journal article" date="2013" name="Mol. Cell">
        <title>SIRT5-mediated lysine desuccinylation impacts diverse metabolic pathways.</title>
        <authorList>
            <person name="Park J."/>
            <person name="Chen Y."/>
            <person name="Tishkoff D.X."/>
            <person name="Peng C."/>
            <person name="Tan M."/>
            <person name="Dai L."/>
            <person name="Xie Z."/>
            <person name="Zhang Y."/>
            <person name="Zwaans B.M."/>
            <person name="Skinner M.E."/>
            <person name="Lombard D.B."/>
            <person name="Zhao Y."/>
        </authorList>
    </citation>
    <scope>ACETYLATION [LARGE SCALE ANALYSIS] AT LYS-402</scope>
    <scope>IDENTIFICATION BY MASS SPECTROMETRY [LARGE SCALE ANALYSIS]</scope>
    <source>
        <tissue>Embryonic fibroblast</tissue>
    </source>
</reference>
<sequence>MQSVLYPWHRQVLRCSWSRLCLLKRYLFTMKLQSPEFQSLFTEGLKSLTELFAKENHELRIAGGAVRDLLNGVKPQDVDFATTATPTQMKEMFQSAGIRMINNKGEKHGTITARLHEENFEVTTLRIDVTTDGRHAEVEFTTDWQKDAERRDLTINSMFLGFDGTLFDYFNGYADLKNKKVRFVGHAKQRIQEDYLRILRYFRFYGRIVDRPGDHDHETLEAIAENAKGLAGISGERIWVELKKILTGDHVNHLIHLIYDLGVAPHIGLPANANLEEFNKVSKNVEGFSPKPMTLLASLFKVQDDVTKLDLRLKISKEEKNLGLFIVKNRKDLIKATDSSEPLKPYQDFVIDSREPDATARVCELLKYQGEHGLLKEMQQWSVPPFPVSGHDIRKVGISSGKEIGALLQQLREQWKKSGYRMEKDELLSYIKKT</sequence>
<dbReference type="EC" id="2.7.7.72" evidence="3"/>
<dbReference type="EMBL" id="AB063106">
    <property type="protein sequence ID" value="BAB70663.1"/>
    <property type="molecule type" value="mRNA"/>
</dbReference>
<dbReference type="EMBL" id="AK011764">
    <property type="protein sequence ID" value="BAB27827.3"/>
    <property type="molecule type" value="mRNA"/>
</dbReference>
<dbReference type="EMBL" id="AK135791">
    <property type="protein sequence ID" value="BAE22664.1"/>
    <property type="molecule type" value="mRNA"/>
</dbReference>
<dbReference type="EMBL" id="AK152739">
    <property type="protein sequence ID" value="BAE31459.1"/>
    <property type="molecule type" value="mRNA"/>
</dbReference>
<dbReference type="EMBL" id="AK166804">
    <property type="protein sequence ID" value="BAE39032.1"/>
    <property type="molecule type" value="mRNA"/>
</dbReference>
<dbReference type="EMBL" id="BC031764">
    <property type="protein sequence ID" value="AAH31764.1"/>
    <property type="molecule type" value="mRNA"/>
</dbReference>
<dbReference type="CCDS" id="CCDS20397.1">
    <molecule id="Q8K1J6-1"/>
</dbReference>
<dbReference type="CCDS" id="CCDS57443.1">
    <molecule id="Q8K1J6-2"/>
</dbReference>
<dbReference type="RefSeq" id="NP_001229287.1">
    <molecule id="Q8K1J6-1"/>
    <property type="nucleotide sequence ID" value="NM_001242358.1"/>
</dbReference>
<dbReference type="RefSeq" id="NP_001229289.1">
    <molecule id="Q8K1J6-2"/>
    <property type="nucleotide sequence ID" value="NM_001242360.1"/>
</dbReference>
<dbReference type="RefSeq" id="NP_081572.1">
    <molecule id="Q8K1J6-1"/>
    <property type="nucleotide sequence ID" value="NM_027296.3"/>
</dbReference>
<dbReference type="RefSeq" id="XP_006506644.1">
    <molecule id="Q8K1J6-1"/>
    <property type="nucleotide sequence ID" value="XM_006506581.5"/>
</dbReference>
<dbReference type="RefSeq" id="XP_036008188.1">
    <molecule id="Q8K1J6-1"/>
    <property type="nucleotide sequence ID" value="XM_036152295.1"/>
</dbReference>
<dbReference type="SMR" id="Q8K1J6"/>
<dbReference type="BioGRID" id="213836">
    <property type="interactions" value="2"/>
</dbReference>
<dbReference type="FunCoup" id="Q8K1J6">
    <property type="interactions" value="5078"/>
</dbReference>
<dbReference type="STRING" id="10090.ENSMUSP00000060900"/>
<dbReference type="iPTMnet" id="Q8K1J6"/>
<dbReference type="PhosphoSitePlus" id="Q8K1J6"/>
<dbReference type="PaxDb" id="10090-ENSMUSP00000060900"/>
<dbReference type="PeptideAtlas" id="Q8K1J6"/>
<dbReference type="ProteomicsDB" id="298136">
    <molecule id="Q8K1J6-1"/>
</dbReference>
<dbReference type="ProteomicsDB" id="298137">
    <molecule id="Q8K1J6-2"/>
</dbReference>
<dbReference type="Pumba" id="Q8K1J6"/>
<dbReference type="Antibodypedia" id="25074">
    <property type="antibodies" value="53 antibodies from 20 providers"/>
</dbReference>
<dbReference type="DNASU" id="70047"/>
<dbReference type="Ensembl" id="ENSMUST00000057578.16">
    <molecule id="Q8K1J6-1"/>
    <property type="protein sequence ID" value="ENSMUSP00000060900.10"/>
    <property type="gene ID" value="ENSMUSG00000013736.17"/>
</dbReference>
<dbReference type="Ensembl" id="ENSMUST00000113247.8">
    <molecule id="Q8K1J6-2"/>
    <property type="protein sequence ID" value="ENSMUSP00000108873.2"/>
    <property type="gene ID" value="ENSMUSG00000013736.17"/>
</dbReference>
<dbReference type="Ensembl" id="ENSMUST00000113248.4">
    <molecule id="Q8K1J6-1"/>
    <property type="protein sequence ID" value="ENSMUSP00000108874.2"/>
    <property type="gene ID" value="ENSMUSG00000013736.17"/>
</dbReference>
<dbReference type="Ensembl" id="ENSMUST00000113249.8">
    <molecule id="Q8K1J6-1"/>
    <property type="protein sequence ID" value="ENSMUSP00000108875.2"/>
    <property type="gene ID" value="ENSMUSG00000013736.17"/>
</dbReference>
<dbReference type="GeneID" id="70047"/>
<dbReference type="KEGG" id="mmu:70047"/>
<dbReference type="UCSC" id="uc009dcy.2">
    <molecule id="Q8K1J6-1"/>
    <property type="organism name" value="mouse"/>
</dbReference>
<dbReference type="UCSC" id="uc029vxx.1">
    <molecule id="Q8K1J6-2"/>
    <property type="organism name" value="mouse"/>
</dbReference>
<dbReference type="AGR" id="MGI:1917297"/>
<dbReference type="CTD" id="51095"/>
<dbReference type="MGI" id="MGI:1917297">
    <property type="gene designation" value="Trnt1"/>
</dbReference>
<dbReference type="VEuPathDB" id="HostDB:ENSMUSG00000013736"/>
<dbReference type="eggNOG" id="KOG2159">
    <property type="taxonomic scope" value="Eukaryota"/>
</dbReference>
<dbReference type="GeneTree" id="ENSGT00390000009678"/>
<dbReference type="HOGENOM" id="CLU_015961_2_1_1"/>
<dbReference type="InParanoid" id="Q8K1J6"/>
<dbReference type="OMA" id="NLCPKPM"/>
<dbReference type="OrthoDB" id="445712at2759"/>
<dbReference type="PhylomeDB" id="Q8K1J6"/>
<dbReference type="TreeFam" id="TF313253"/>
<dbReference type="BioGRID-ORCS" id="70047">
    <property type="hits" value="27 hits in 81 CRISPR screens"/>
</dbReference>
<dbReference type="ChiTaRS" id="Trnt1">
    <property type="organism name" value="mouse"/>
</dbReference>
<dbReference type="PRO" id="PR:Q8K1J6"/>
<dbReference type="Proteomes" id="UP000000589">
    <property type="component" value="Chromosome 6"/>
</dbReference>
<dbReference type="RNAct" id="Q8K1J6">
    <property type="molecule type" value="protein"/>
</dbReference>
<dbReference type="Bgee" id="ENSMUSG00000013736">
    <property type="expression patterns" value="Expressed in spermatocyte and 247 other cell types or tissues"/>
</dbReference>
<dbReference type="ExpressionAtlas" id="Q8K1J6">
    <property type="expression patterns" value="baseline and differential"/>
</dbReference>
<dbReference type="GO" id="GO:0005829">
    <property type="term" value="C:cytosol"/>
    <property type="evidence" value="ECO:0007669"/>
    <property type="project" value="Ensembl"/>
</dbReference>
<dbReference type="GO" id="GO:0005739">
    <property type="term" value="C:mitochondrion"/>
    <property type="evidence" value="ECO:0007005"/>
    <property type="project" value="MGI"/>
</dbReference>
<dbReference type="GO" id="GO:0005634">
    <property type="term" value="C:nucleus"/>
    <property type="evidence" value="ECO:0000250"/>
    <property type="project" value="UniProtKB"/>
</dbReference>
<dbReference type="GO" id="GO:0005524">
    <property type="term" value="F:ATP binding"/>
    <property type="evidence" value="ECO:0007669"/>
    <property type="project" value="UniProtKB-KW"/>
</dbReference>
<dbReference type="GO" id="GO:0004810">
    <property type="term" value="F:CCA tRNA nucleotidyltransferase activity"/>
    <property type="evidence" value="ECO:0000250"/>
    <property type="project" value="UniProtKB"/>
</dbReference>
<dbReference type="GO" id="GO:0160016">
    <property type="term" value="F:CCACCA tRNA nucleotidyltransferase activity"/>
    <property type="evidence" value="ECO:0000250"/>
    <property type="project" value="UniProtKB"/>
</dbReference>
<dbReference type="GO" id="GO:0046872">
    <property type="term" value="F:metal ion binding"/>
    <property type="evidence" value="ECO:0007669"/>
    <property type="project" value="UniProtKB-KW"/>
</dbReference>
<dbReference type="GO" id="GO:0042803">
    <property type="term" value="F:protein homodimerization activity"/>
    <property type="evidence" value="ECO:0007669"/>
    <property type="project" value="Ensembl"/>
</dbReference>
<dbReference type="GO" id="GO:0000049">
    <property type="term" value="F:tRNA binding"/>
    <property type="evidence" value="ECO:0000250"/>
    <property type="project" value="UniProtKB"/>
</dbReference>
<dbReference type="GO" id="GO:1990180">
    <property type="term" value="P:mitochondrial tRNA 3'-end processing"/>
    <property type="evidence" value="ECO:0000250"/>
    <property type="project" value="UniProtKB"/>
</dbReference>
<dbReference type="GO" id="GO:0072344">
    <property type="term" value="P:rescue of stalled ribosome"/>
    <property type="evidence" value="ECO:0007669"/>
    <property type="project" value="Ensembl"/>
</dbReference>
<dbReference type="GO" id="GO:0001680">
    <property type="term" value="P:tRNA 3'-terminal CCA addition"/>
    <property type="evidence" value="ECO:0000250"/>
    <property type="project" value="UniProtKB"/>
</dbReference>
<dbReference type="GO" id="GO:0008033">
    <property type="term" value="P:tRNA processing"/>
    <property type="evidence" value="ECO:0000266"/>
    <property type="project" value="MGI"/>
</dbReference>
<dbReference type="GO" id="GO:0106354">
    <property type="term" value="P:tRNA surveillance"/>
    <property type="evidence" value="ECO:0007669"/>
    <property type="project" value="Ensembl"/>
</dbReference>
<dbReference type="CDD" id="cd05398">
    <property type="entry name" value="NT_ClassII-CCAase"/>
    <property type="match status" value="1"/>
</dbReference>
<dbReference type="FunFam" id="1.10.3090.10:FF:000004">
    <property type="entry name" value="CCA tRNA nucleotidyltransferase 1, mitochondrial"/>
    <property type="match status" value="1"/>
</dbReference>
<dbReference type="FunFam" id="3.30.460.10:FF:000023">
    <property type="entry name" value="CCA tRNA nucleotidyltransferase 1, mitochondrial"/>
    <property type="match status" value="1"/>
</dbReference>
<dbReference type="Gene3D" id="3.30.460.10">
    <property type="entry name" value="Beta Polymerase, domain 2"/>
    <property type="match status" value="1"/>
</dbReference>
<dbReference type="Gene3D" id="1.10.3090.10">
    <property type="entry name" value="cca-adding enzyme, domain 2"/>
    <property type="match status" value="1"/>
</dbReference>
<dbReference type="InterPro" id="IPR050264">
    <property type="entry name" value="Bact_CCA-adding_enz_type3_sf"/>
</dbReference>
<dbReference type="InterPro" id="IPR043519">
    <property type="entry name" value="NT_sf"/>
</dbReference>
<dbReference type="InterPro" id="IPR002646">
    <property type="entry name" value="PolA_pol_head_dom"/>
</dbReference>
<dbReference type="InterPro" id="IPR032828">
    <property type="entry name" value="PolyA_RNA-bd"/>
</dbReference>
<dbReference type="PANTHER" id="PTHR46173">
    <property type="entry name" value="CCA TRNA NUCLEOTIDYLTRANSFERASE 1, MITOCHONDRIAL"/>
    <property type="match status" value="1"/>
</dbReference>
<dbReference type="PANTHER" id="PTHR46173:SF1">
    <property type="entry name" value="CCA TRNA NUCLEOTIDYLTRANSFERASE 1, MITOCHONDRIAL"/>
    <property type="match status" value="1"/>
</dbReference>
<dbReference type="Pfam" id="PF01743">
    <property type="entry name" value="PolyA_pol"/>
    <property type="match status" value="1"/>
</dbReference>
<dbReference type="Pfam" id="PF12627">
    <property type="entry name" value="PolyA_pol_RNAbd"/>
    <property type="match status" value="1"/>
</dbReference>
<dbReference type="SUPFAM" id="SSF81301">
    <property type="entry name" value="Nucleotidyltransferase"/>
    <property type="match status" value="1"/>
</dbReference>
<dbReference type="SUPFAM" id="SSF81891">
    <property type="entry name" value="Poly A polymerase C-terminal region-like"/>
    <property type="match status" value="1"/>
</dbReference>
<feature type="transit peptide" description="Mitochondrion" evidence="4">
    <location>
        <begin position="1"/>
        <end position="41"/>
    </location>
</feature>
<feature type="chain" id="PRO_0000004783" description="CCA tRNA nucleotidyltransferase 1, mitochondrial">
    <location>
        <begin position="42"/>
        <end position="434"/>
    </location>
</feature>
<feature type="binding site" evidence="2">
    <location>
        <position position="64"/>
    </location>
    <ligand>
        <name>ATP</name>
        <dbReference type="ChEBI" id="CHEBI:30616"/>
    </ligand>
</feature>
<feature type="binding site" evidence="2">
    <location>
        <position position="64"/>
    </location>
    <ligand>
        <name>CTP</name>
        <dbReference type="ChEBI" id="CHEBI:37563"/>
    </ligand>
</feature>
<feature type="binding site" evidence="2">
    <location>
        <position position="67"/>
    </location>
    <ligand>
        <name>ATP</name>
        <dbReference type="ChEBI" id="CHEBI:30616"/>
    </ligand>
</feature>
<feature type="binding site" evidence="2">
    <location>
        <position position="67"/>
    </location>
    <ligand>
        <name>CTP</name>
        <dbReference type="ChEBI" id="CHEBI:37563"/>
    </ligand>
</feature>
<feature type="binding site" evidence="1">
    <location>
        <position position="77"/>
    </location>
    <ligand>
        <name>Mg(2+)</name>
        <dbReference type="ChEBI" id="CHEBI:18420"/>
    </ligand>
</feature>
<feature type="binding site" evidence="1">
    <location>
        <position position="79"/>
    </location>
    <ligand>
        <name>Mg(2+)</name>
        <dbReference type="ChEBI" id="CHEBI:18420"/>
    </ligand>
</feature>
<feature type="binding site" evidence="2">
    <location>
        <position position="151"/>
    </location>
    <ligand>
        <name>ATP</name>
        <dbReference type="ChEBI" id="CHEBI:30616"/>
    </ligand>
</feature>
<feature type="binding site" evidence="2">
    <location>
        <position position="151"/>
    </location>
    <ligand>
        <name>CTP</name>
        <dbReference type="ChEBI" id="CHEBI:37563"/>
    </ligand>
</feature>
<feature type="binding site" evidence="2">
    <location>
        <position position="194"/>
    </location>
    <ligand>
        <name>ATP</name>
        <dbReference type="ChEBI" id="CHEBI:30616"/>
    </ligand>
</feature>
<feature type="binding site" evidence="2">
    <location>
        <position position="194"/>
    </location>
    <ligand>
        <name>CTP</name>
        <dbReference type="ChEBI" id="CHEBI:37563"/>
    </ligand>
</feature>
<feature type="binding site" evidence="2">
    <location>
        <position position="197"/>
    </location>
    <ligand>
        <name>ATP</name>
        <dbReference type="ChEBI" id="CHEBI:30616"/>
    </ligand>
</feature>
<feature type="binding site" evidence="2">
    <location>
        <position position="197"/>
    </location>
    <ligand>
        <name>CTP</name>
        <dbReference type="ChEBI" id="CHEBI:37563"/>
    </ligand>
</feature>
<feature type="binding site" evidence="2">
    <location>
        <position position="200"/>
    </location>
    <ligand>
        <name>ATP</name>
        <dbReference type="ChEBI" id="CHEBI:30616"/>
    </ligand>
</feature>
<feature type="binding site" evidence="2">
    <location>
        <position position="200"/>
    </location>
    <ligand>
        <name>CTP</name>
        <dbReference type="ChEBI" id="CHEBI:37563"/>
    </ligand>
</feature>
<feature type="binding site" evidence="2">
    <location>
        <position position="203"/>
    </location>
    <ligand>
        <name>ATP</name>
        <dbReference type="ChEBI" id="CHEBI:30616"/>
    </ligand>
</feature>
<feature type="binding site" evidence="2">
    <location>
        <position position="203"/>
    </location>
    <ligand>
        <name>CTP</name>
        <dbReference type="ChEBI" id="CHEBI:37563"/>
    </ligand>
</feature>
<feature type="site" description="May assist in discriminating ATP from CTP" evidence="2">
    <location>
        <position position="152"/>
    </location>
</feature>
<feature type="site" description="Involved in nucleotide selection" evidence="4">
    <location>
        <position position="193"/>
    </location>
</feature>
<feature type="modified residue" description="Phosphoserine" evidence="3">
    <location>
        <position position="400"/>
    </location>
</feature>
<feature type="modified residue" description="N6-acetyllysine" evidence="7">
    <location>
        <position position="402"/>
    </location>
</feature>
<feature type="splice variant" id="VSP_018616" description="In isoform 2." evidence="5">
    <original>FYGRIVDRPGDH</original>
    <variation>PGIVLGDLTTEK</variation>
    <location>
        <begin position="204"/>
        <end position="215"/>
    </location>
</feature>
<feature type="splice variant" id="VSP_018617" description="In isoform 2." evidence="5">
    <location>
        <begin position="216"/>
        <end position="434"/>
    </location>
</feature>
<feature type="sequence conflict" description="In Ref. 1; BAB70663." evidence="6" ref="1">
    <original>F</original>
    <variation>I</variation>
    <location>
        <position position="202"/>
    </location>
</feature>
<organism>
    <name type="scientific">Mus musculus</name>
    <name type="common">Mouse</name>
    <dbReference type="NCBI Taxonomy" id="10090"/>
    <lineage>
        <taxon>Eukaryota</taxon>
        <taxon>Metazoa</taxon>
        <taxon>Chordata</taxon>
        <taxon>Craniata</taxon>
        <taxon>Vertebrata</taxon>
        <taxon>Euteleostomi</taxon>
        <taxon>Mammalia</taxon>
        <taxon>Eutheria</taxon>
        <taxon>Euarchontoglires</taxon>
        <taxon>Glires</taxon>
        <taxon>Rodentia</taxon>
        <taxon>Myomorpha</taxon>
        <taxon>Muroidea</taxon>
        <taxon>Muridae</taxon>
        <taxon>Murinae</taxon>
        <taxon>Mus</taxon>
        <taxon>Mus</taxon>
    </lineage>
</organism>
<comment type="function">
    <text evidence="3">Nucleotidyltransferase that catalyzes the addition and repair of the essential 3'-terminal CCA sequence in tRNAs, which is necessary for the attachment of amino acids to the 3' terminus of tRNA molecules, using CTP and ATP as substrates. tRNA 3'-terminal CCA addition is required both for tRNA processing and repair. Promotes tRNA repair and recycling downstream of the ribosome-associated quality control (RQC) pathway by mediating addition of the tRNA 3'-terminal CCA following cleavage by ANKZF1 and repair by ELAC1. Also involved in tRNA surveillance by mediating tandem CCA addition to generate a CCACCA at the 3' terminus of unstable tRNAs and tRNA-like transcripts. While stable tRNAs receive only 3'-terminal CCA, unstable tRNAs beginning with GG are marked with CCACCA and rapidly degraded. The structural flexibility of RNA controls the choice between CCA versus CCACCA addition: following the first CCA addition cycle, nucleotide-binding to the active site triggers a clockwise screw motion, producing torque on the RNA. This ejects stable RNAs, whereas unstable RNAs are refolded while bound to the enzyme and subjected to a second CCA catalytic cycle.</text>
</comment>
<comment type="catalytic activity">
    <reaction evidence="3">
        <text>a tRNA precursor + 2 CTP + ATP = a tRNA with a 3' CCA end + 3 diphosphate</text>
        <dbReference type="Rhea" id="RHEA:14433"/>
        <dbReference type="Rhea" id="RHEA-COMP:10465"/>
        <dbReference type="Rhea" id="RHEA-COMP:10468"/>
        <dbReference type="ChEBI" id="CHEBI:30616"/>
        <dbReference type="ChEBI" id="CHEBI:33019"/>
        <dbReference type="ChEBI" id="CHEBI:37563"/>
        <dbReference type="ChEBI" id="CHEBI:74896"/>
        <dbReference type="ChEBI" id="CHEBI:83071"/>
        <dbReference type="EC" id="2.7.7.72"/>
    </reaction>
    <physiologicalReaction direction="left-to-right" evidence="3">
        <dbReference type="Rhea" id="RHEA:14434"/>
    </physiologicalReaction>
</comment>
<comment type="catalytic activity">
    <reaction evidence="3">
        <text>a tRNA with a 3' CCA end + 2 CTP + ATP = a tRNA with a 3' CCACCA end + 3 diphosphate</text>
        <dbReference type="Rhea" id="RHEA:76235"/>
        <dbReference type="Rhea" id="RHEA-COMP:10468"/>
        <dbReference type="Rhea" id="RHEA-COMP:18655"/>
        <dbReference type="ChEBI" id="CHEBI:30616"/>
        <dbReference type="ChEBI" id="CHEBI:33019"/>
        <dbReference type="ChEBI" id="CHEBI:37563"/>
        <dbReference type="ChEBI" id="CHEBI:83071"/>
        <dbReference type="ChEBI" id="CHEBI:195187"/>
    </reaction>
    <physiologicalReaction direction="left-to-right" evidence="3">
        <dbReference type="Rhea" id="RHEA:76236"/>
    </physiologicalReaction>
</comment>
<comment type="cofactor">
    <cofactor evidence="1">
        <name>Mg(2+)</name>
        <dbReference type="ChEBI" id="CHEBI:18420"/>
    </cofactor>
</comment>
<comment type="subunit">
    <text evidence="3">Monomer, and homodimer.</text>
</comment>
<comment type="subcellular location">
    <subcellularLocation>
        <location evidence="3">Mitochondrion</location>
    </subcellularLocation>
    <subcellularLocation>
        <location evidence="3">Cytoplasm</location>
    </subcellularLocation>
    <subcellularLocation>
        <location evidence="3">Nucleus</location>
    </subcellularLocation>
</comment>
<comment type="alternative products">
    <event type="alternative splicing"/>
    <isoform>
        <id>Q8K1J6-1</id>
        <name>1</name>
        <sequence type="displayed"/>
    </isoform>
    <isoform>
        <id>Q8K1J6-2</id>
        <name>2</name>
        <sequence type="described" ref="VSP_018616 VSP_018617"/>
    </isoform>
</comment>
<comment type="similarity">
    <text evidence="6">Belongs to the tRNA nucleotidyltransferase/poly(A) polymerase family.</text>
</comment>